<name>ORC2_HUMAN</name>
<dbReference type="EMBL" id="U40268">
    <property type="protein sequence ID" value="AAC50326.2"/>
    <property type="molecule type" value="mRNA"/>
</dbReference>
<dbReference type="EMBL" id="U27459">
    <property type="protein sequence ID" value="AAB33970.1"/>
    <property type="molecule type" value="mRNA"/>
</dbReference>
<dbReference type="EMBL" id="AY652588">
    <property type="protein sequence ID" value="AAT46690.1"/>
    <property type="molecule type" value="Genomic_DNA"/>
</dbReference>
<dbReference type="EMBL" id="AC005037">
    <property type="protein sequence ID" value="AAY14725.1"/>
    <property type="molecule type" value="Genomic_DNA"/>
</dbReference>
<dbReference type="EMBL" id="CH471063">
    <property type="protein sequence ID" value="EAW70228.1"/>
    <property type="molecule type" value="Genomic_DNA"/>
</dbReference>
<dbReference type="EMBL" id="BC014834">
    <property type="protein sequence ID" value="AAH14834.1"/>
    <property type="molecule type" value="mRNA"/>
</dbReference>
<dbReference type="CCDS" id="CCDS2334.1"/>
<dbReference type="RefSeq" id="NP_006181.1">
    <property type="nucleotide sequence ID" value="NM_006190.5"/>
</dbReference>
<dbReference type="RefSeq" id="XP_006712618.1">
    <property type="nucleotide sequence ID" value="XM_006712555.5"/>
</dbReference>
<dbReference type="RefSeq" id="XP_047300525.1">
    <property type="nucleotide sequence ID" value="XM_047444569.1"/>
</dbReference>
<dbReference type="RefSeq" id="XP_054198282.1">
    <property type="nucleotide sequence ID" value="XM_054342307.1"/>
</dbReference>
<dbReference type="RefSeq" id="XP_054198283.1">
    <property type="nucleotide sequence ID" value="XM_054342308.1"/>
</dbReference>
<dbReference type="PDB" id="5C8H">
    <property type="method" value="X-ray"/>
    <property type="resolution" value="2.01 A"/>
    <property type="chains" value="A=458-577"/>
</dbReference>
<dbReference type="PDB" id="5UJ8">
    <property type="method" value="X-ray"/>
    <property type="resolution" value="6.00 A"/>
    <property type="chains" value="E/F/G/H=231-577"/>
</dbReference>
<dbReference type="PDB" id="5UJM">
    <property type="method" value="EM"/>
    <property type="resolution" value="18.00 A"/>
    <property type="chains" value="B=231-577"/>
</dbReference>
<dbReference type="PDB" id="7CTE">
    <property type="method" value="EM"/>
    <property type="resolution" value="3.80 A"/>
    <property type="chains" value="B=1-577"/>
</dbReference>
<dbReference type="PDB" id="7CTF">
    <property type="method" value="EM"/>
    <property type="resolution" value="4.80 A"/>
    <property type="chains" value="B=1-577"/>
</dbReference>
<dbReference type="PDB" id="7CTG">
    <property type="method" value="EM"/>
    <property type="resolution" value="5.00 A"/>
    <property type="chains" value="B=1-577"/>
</dbReference>
<dbReference type="PDB" id="7JPO">
    <property type="method" value="EM"/>
    <property type="resolution" value="3.20 A"/>
    <property type="chains" value="B=1-577"/>
</dbReference>
<dbReference type="PDB" id="7JPP">
    <property type="method" value="EM"/>
    <property type="resolution" value="3.70 A"/>
    <property type="chains" value="B=1-577"/>
</dbReference>
<dbReference type="PDB" id="7JPQ">
    <property type="method" value="EM"/>
    <property type="resolution" value="3.50 A"/>
    <property type="chains" value="B=1-577"/>
</dbReference>
<dbReference type="PDB" id="7JPR">
    <property type="method" value="EM"/>
    <property type="resolution" value="4.00 A"/>
    <property type="chains" value="B=1-577"/>
</dbReference>
<dbReference type="PDB" id="7JPS">
    <property type="method" value="EM"/>
    <property type="resolution" value="4.40 A"/>
    <property type="chains" value="B=1-577"/>
</dbReference>
<dbReference type="PDB" id="8RWV">
    <property type="method" value="EM"/>
    <property type="resolution" value="6.68 A"/>
    <property type="chains" value="B=1-577"/>
</dbReference>
<dbReference type="PDB" id="8S0C">
    <property type="method" value="EM"/>
    <property type="resolution" value="4.00 A"/>
    <property type="chains" value="B=1-577"/>
</dbReference>
<dbReference type="PDB" id="8S0D">
    <property type="method" value="EM"/>
    <property type="resolution" value="3.60 A"/>
    <property type="chains" value="B=1-577"/>
</dbReference>
<dbReference type="PDB" id="8S0E">
    <property type="method" value="EM"/>
    <property type="resolution" value="3.80 A"/>
    <property type="chains" value="B=1-577"/>
</dbReference>
<dbReference type="PDB" id="8S0F">
    <property type="method" value="EM"/>
    <property type="resolution" value="4.10 A"/>
    <property type="chains" value="B=1-577"/>
</dbReference>
<dbReference type="PDBsum" id="5C8H"/>
<dbReference type="PDBsum" id="5UJ8"/>
<dbReference type="PDBsum" id="5UJM"/>
<dbReference type="PDBsum" id="7CTE"/>
<dbReference type="PDBsum" id="7CTF"/>
<dbReference type="PDBsum" id="7CTG"/>
<dbReference type="PDBsum" id="7JPO"/>
<dbReference type="PDBsum" id="7JPP"/>
<dbReference type="PDBsum" id="7JPQ"/>
<dbReference type="PDBsum" id="7JPR"/>
<dbReference type="PDBsum" id="7JPS"/>
<dbReference type="PDBsum" id="8RWV"/>
<dbReference type="PDBsum" id="8S0C"/>
<dbReference type="PDBsum" id="8S0D"/>
<dbReference type="PDBsum" id="8S0E"/>
<dbReference type="PDBsum" id="8S0F"/>
<dbReference type="EMDB" id="EMD-19566"/>
<dbReference type="EMDB" id="EMD-19621"/>
<dbReference type="EMDB" id="EMD-19622"/>
<dbReference type="EMDB" id="EMD-19623"/>
<dbReference type="EMDB" id="EMD-19624"/>
<dbReference type="EMDB" id="EMD-22417"/>
<dbReference type="EMDB" id="EMD-22418"/>
<dbReference type="EMDB" id="EMD-22419"/>
<dbReference type="EMDB" id="EMD-22420"/>
<dbReference type="EMDB" id="EMD-22421"/>
<dbReference type="EMDB" id="EMD-30462"/>
<dbReference type="EMDB" id="EMD-30463"/>
<dbReference type="EMDB" id="EMD-30464"/>
<dbReference type="SMR" id="Q13416"/>
<dbReference type="BioGRID" id="111041">
    <property type="interactions" value="109"/>
</dbReference>
<dbReference type="ComplexPortal" id="CPX-1880">
    <property type="entry name" value="Nuclear origin recognition complex"/>
</dbReference>
<dbReference type="CORUM" id="Q13416"/>
<dbReference type="DIP" id="DIP-29689N"/>
<dbReference type="ELM" id="Q13416"/>
<dbReference type="FunCoup" id="Q13416">
    <property type="interactions" value="3848"/>
</dbReference>
<dbReference type="IntAct" id="Q13416">
    <property type="interactions" value="61"/>
</dbReference>
<dbReference type="MINT" id="Q13416"/>
<dbReference type="STRING" id="9606.ENSP00000234296"/>
<dbReference type="GlyGen" id="Q13416">
    <property type="glycosylation" value="2 sites, 1 O-linked glycan (2 sites)"/>
</dbReference>
<dbReference type="iPTMnet" id="Q13416"/>
<dbReference type="PhosphoSitePlus" id="Q13416"/>
<dbReference type="BioMuta" id="ORC2"/>
<dbReference type="DMDM" id="8488999"/>
<dbReference type="jPOST" id="Q13416"/>
<dbReference type="MassIVE" id="Q13416"/>
<dbReference type="PaxDb" id="9606-ENSP00000234296"/>
<dbReference type="PeptideAtlas" id="Q13416"/>
<dbReference type="ProteomicsDB" id="59395"/>
<dbReference type="Pumba" id="Q13416"/>
<dbReference type="Antibodypedia" id="34131">
    <property type="antibodies" value="222 antibodies from 36 providers"/>
</dbReference>
<dbReference type="DNASU" id="4999"/>
<dbReference type="Ensembl" id="ENST00000234296.7">
    <property type="protein sequence ID" value="ENSP00000234296.2"/>
    <property type="gene ID" value="ENSG00000115942.9"/>
</dbReference>
<dbReference type="GeneID" id="4999"/>
<dbReference type="KEGG" id="hsa:4999"/>
<dbReference type="MANE-Select" id="ENST00000234296.7">
    <property type="protein sequence ID" value="ENSP00000234296.2"/>
    <property type="RefSeq nucleotide sequence ID" value="NM_006190.5"/>
    <property type="RefSeq protein sequence ID" value="NP_006181.1"/>
</dbReference>
<dbReference type="UCSC" id="uc002uwr.4">
    <property type="organism name" value="human"/>
</dbReference>
<dbReference type="AGR" id="HGNC:8488"/>
<dbReference type="CTD" id="4999"/>
<dbReference type="DisGeNET" id="4999"/>
<dbReference type="GeneCards" id="ORC2"/>
<dbReference type="HGNC" id="HGNC:8488">
    <property type="gene designation" value="ORC2"/>
</dbReference>
<dbReference type="HPA" id="ENSG00000115942">
    <property type="expression patterns" value="Low tissue specificity"/>
</dbReference>
<dbReference type="MIM" id="601182">
    <property type="type" value="gene"/>
</dbReference>
<dbReference type="neXtProt" id="NX_Q13416"/>
<dbReference type="OpenTargets" id="ENSG00000115942"/>
<dbReference type="PharmGKB" id="PA32809"/>
<dbReference type="VEuPathDB" id="HostDB:ENSG00000115942"/>
<dbReference type="eggNOG" id="KOG2928">
    <property type="taxonomic scope" value="Eukaryota"/>
</dbReference>
<dbReference type="GeneTree" id="ENSGT00390000015228"/>
<dbReference type="HOGENOM" id="CLU_018596_3_0_1"/>
<dbReference type="InParanoid" id="Q13416"/>
<dbReference type="OMA" id="AHERYFF"/>
<dbReference type="OrthoDB" id="20198at2759"/>
<dbReference type="PAN-GO" id="Q13416">
    <property type="GO annotations" value="2 GO annotations based on evolutionary models"/>
</dbReference>
<dbReference type="PhylomeDB" id="Q13416"/>
<dbReference type="TreeFam" id="TF101092"/>
<dbReference type="BRENDA" id="3.6.4.B8">
    <property type="organism ID" value="2681"/>
</dbReference>
<dbReference type="PathwayCommons" id="Q13416"/>
<dbReference type="Reactome" id="R-HSA-113507">
    <property type="pathway name" value="E2F-enabled inhibition of pre-replication complex formation"/>
</dbReference>
<dbReference type="Reactome" id="R-HSA-176187">
    <property type="pathway name" value="Activation of ATR in response to replication stress"/>
</dbReference>
<dbReference type="Reactome" id="R-HSA-68616">
    <property type="pathway name" value="Assembly of the ORC complex at the origin of replication"/>
</dbReference>
<dbReference type="Reactome" id="R-HSA-68689">
    <property type="pathway name" value="CDC6 association with the ORC:origin complex"/>
</dbReference>
<dbReference type="Reactome" id="R-HSA-68867">
    <property type="pathway name" value="Assembly of the pre-replicative complex"/>
</dbReference>
<dbReference type="Reactome" id="R-HSA-68949">
    <property type="pathway name" value="Orc1 removal from chromatin"/>
</dbReference>
<dbReference type="Reactome" id="R-HSA-68962">
    <property type="pathway name" value="Activation of the pre-replicative complex"/>
</dbReference>
<dbReference type="SignaLink" id="Q13416"/>
<dbReference type="SIGNOR" id="Q13416"/>
<dbReference type="BioGRID-ORCS" id="4999">
    <property type="hits" value="70 hits in 1163 CRISPR screens"/>
</dbReference>
<dbReference type="CD-CODE" id="8C2F96ED">
    <property type="entry name" value="Centrosome"/>
</dbReference>
<dbReference type="ChiTaRS" id="ORC2">
    <property type="organism name" value="human"/>
</dbReference>
<dbReference type="EvolutionaryTrace" id="Q13416"/>
<dbReference type="GeneWiki" id="ORC2"/>
<dbReference type="GeneWiki" id="ORC2L"/>
<dbReference type="GenomeRNAi" id="4999"/>
<dbReference type="Pharos" id="Q13416">
    <property type="development level" value="Tbio"/>
</dbReference>
<dbReference type="PRO" id="PR:Q13416"/>
<dbReference type="Proteomes" id="UP000005640">
    <property type="component" value="Chromosome 2"/>
</dbReference>
<dbReference type="RNAct" id="Q13416">
    <property type="molecule type" value="protein"/>
</dbReference>
<dbReference type="Bgee" id="ENSG00000115942">
    <property type="expression patterns" value="Expressed in calcaneal tendon and 177 other cell types or tissues"/>
</dbReference>
<dbReference type="ExpressionAtlas" id="Q13416">
    <property type="expression patterns" value="baseline and differential"/>
</dbReference>
<dbReference type="GO" id="GO:0005813">
    <property type="term" value="C:centrosome"/>
    <property type="evidence" value="ECO:0000314"/>
    <property type="project" value="CACAO"/>
</dbReference>
<dbReference type="GO" id="GO:0000781">
    <property type="term" value="C:chromosome, telomeric region"/>
    <property type="evidence" value="ECO:0007005"/>
    <property type="project" value="BHF-UCL"/>
</dbReference>
<dbReference type="GO" id="GO:0000792">
    <property type="term" value="C:heterochromatin"/>
    <property type="evidence" value="ECO:0000314"/>
    <property type="project" value="CACAO"/>
</dbReference>
<dbReference type="GO" id="GO:0000939">
    <property type="term" value="C:inner kinetochore"/>
    <property type="evidence" value="ECO:0007669"/>
    <property type="project" value="Ensembl"/>
</dbReference>
<dbReference type="GO" id="GO:0016020">
    <property type="term" value="C:membrane"/>
    <property type="evidence" value="ECO:0007005"/>
    <property type="project" value="UniProtKB"/>
</dbReference>
<dbReference type="GO" id="GO:0005664">
    <property type="term" value="C:nuclear origin of replication recognition complex"/>
    <property type="evidence" value="ECO:0000314"/>
    <property type="project" value="UniProtKB"/>
</dbReference>
<dbReference type="GO" id="GO:0005654">
    <property type="term" value="C:nucleoplasm"/>
    <property type="evidence" value="ECO:0000314"/>
    <property type="project" value="HPA"/>
</dbReference>
<dbReference type="GO" id="GO:0005634">
    <property type="term" value="C:nucleus"/>
    <property type="evidence" value="ECO:0000314"/>
    <property type="project" value="UniProtKB"/>
</dbReference>
<dbReference type="GO" id="GO:0000808">
    <property type="term" value="C:origin recognition complex"/>
    <property type="evidence" value="ECO:0000314"/>
    <property type="project" value="UniProtKB"/>
</dbReference>
<dbReference type="GO" id="GO:0003688">
    <property type="term" value="F:DNA replication origin binding"/>
    <property type="evidence" value="ECO:0000318"/>
    <property type="project" value="GO_Central"/>
</dbReference>
<dbReference type="GO" id="GO:0006270">
    <property type="term" value="P:DNA replication initiation"/>
    <property type="evidence" value="ECO:0000314"/>
    <property type="project" value="ComplexPortal"/>
</dbReference>
<dbReference type="GO" id="GO:0000122">
    <property type="term" value="P:negative regulation of transcription by RNA polymerase II"/>
    <property type="evidence" value="ECO:0000304"/>
    <property type="project" value="ProtInc"/>
</dbReference>
<dbReference type="InterPro" id="IPR007220">
    <property type="entry name" value="ORC2"/>
</dbReference>
<dbReference type="InterPro" id="IPR056772">
    <property type="entry name" value="RecA-like_ORC2"/>
</dbReference>
<dbReference type="InterPro" id="IPR056773">
    <property type="entry name" value="WHD_ORC2"/>
</dbReference>
<dbReference type="PANTHER" id="PTHR14052">
    <property type="entry name" value="ORIGIN RECOGNITION COMPLEX SUBUNIT 2"/>
    <property type="match status" value="1"/>
</dbReference>
<dbReference type="PANTHER" id="PTHR14052:SF0">
    <property type="entry name" value="ORIGIN RECOGNITION COMPLEX SUBUNIT 2"/>
    <property type="match status" value="1"/>
</dbReference>
<dbReference type="Pfam" id="PF04084">
    <property type="entry name" value="RecA-like_ORC2"/>
    <property type="match status" value="1"/>
</dbReference>
<dbReference type="Pfam" id="PF24882">
    <property type="entry name" value="WHD_ORC2"/>
    <property type="match status" value="1"/>
</dbReference>
<proteinExistence type="evidence at protein level"/>
<organism>
    <name type="scientific">Homo sapiens</name>
    <name type="common">Human</name>
    <dbReference type="NCBI Taxonomy" id="9606"/>
    <lineage>
        <taxon>Eukaryota</taxon>
        <taxon>Metazoa</taxon>
        <taxon>Chordata</taxon>
        <taxon>Craniata</taxon>
        <taxon>Vertebrata</taxon>
        <taxon>Euteleostomi</taxon>
        <taxon>Mammalia</taxon>
        <taxon>Eutheria</taxon>
        <taxon>Euarchontoglires</taxon>
        <taxon>Primates</taxon>
        <taxon>Haplorrhini</taxon>
        <taxon>Catarrhini</taxon>
        <taxon>Hominidae</taxon>
        <taxon>Homo</taxon>
    </lineage>
</organism>
<comment type="function">
    <text evidence="6 8">Component of the origin recognition complex (ORC) that binds origins of replication. DNA-binding is ATP-dependent. The specific DNA sequences that define origins of replication have not been identified yet. ORC is required to assemble the pre-replication complex necessary to initiate DNA replication. Binds histone H3 and H4 trimethylation marks H3K9me3, H3K20me3 and H4K27me3. Stabilizes LRWD1, by protecting it from ubiquitin-mediated proteasomal degradation. Also stabilizes ORC3.</text>
</comment>
<comment type="subunit">
    <text evidence="1 3 4 5 7 8">Component of ORC, a complex composed of at least 6 subunits: ORC1, ORC2, ORC3, ORC4, ORC5 and ORC6. ORC is regulated in a cell-cycle dependent manner. It is sequentially assembled at the exit from anaphase of mitosis and disassembled as cells enter S phase (PubMed:12909626, PubMed:17716973). Interacts with DBF4 (By similarity). Interacts with MCM10 (PubMed:11095689). Interacts with LRWD1 throughout the cell cycle; this interaction, which occurs only with non-ubiquitinated form of LRWD1, prevents LRWD1 ubiquitination and hence stabilizes the protein (PubMed:22645314). Interacts with POLQ (PubMed:24989122).</text>
</comment>
<comment type="interaction">
    <interactant intactId="EBI-374957">
        <id>Q13416</id>
    </interactant>
    <interactant intactId="EBI-374880">
        <id>Q99459</id>
        <label>CDC5L</label>
    </interactant>
    <organismsDiffer>false</organismsDiffer>
    <experiments>2</experiments>
</comment>
<comment type="interaction">
    <interactant intactId="EBI-374957">
        <id>Q13416</id>
    </interactant>
    <interactant intactId="EBI-11962928">
        <id>Q9UI47-2</id>
        <label>CTNNA3</label>
    </interactant>
    <organismsDiffer>false</organismsDiffer>
    <experiments>3</experiments>
</comment>
<comment type="interaction">
    <interactant intactId="EBI-374957">
        <id>Q13416</id>
    </interactant>
    <interactant intactId="EBI-866480">
        <id>Q08050</id>
        <label>FOXM1</label>
    </interactant>
    <organismsDiffer>false</organismsDiffer>
    <experiments>2</experiments>
</comment>
<comment type="interaction">
    <interactant intactId="EBI-374957">
        <id>Q13416</id>
    </interactant>
    <interactant intactId="EBI-374912">
        <id>Q7L590</id>
        <label>MCM10</label>
    </interactant>
    <organismsDiffer>false</organismsDiffer>
    <experiments>5</experiments>
</comment>
<comment type="interaction">
    <interactant intactId="EBI-374957">
        <id>Q13416</id>
    </interactant>
    <interactant intactId="EBI-355153">
        <id>P25205</id>
        <label>MCM3</label>
    </interactant>
    <organismsDiffer>false</organismsDiffer>
    <experiments>2</experiments>
</comment>
<comment type="interaction">
    <interactant intactId="EBI-374957">
        <id>Q13416</id>
    </interactant>
    <interactant intactId="EBI-374847">
        <id>Q13415</id>
        <label>ORC1</label>
    </interactant>
    <organismsDiffer>false</organismsDiffer>
    <experiments>14</experiments>
</comment>
<comment type="interaction">
    <interactant intactId="EBI-374957">
        <id>Q13416</id>
    </interactant>
    <interactant intactId="EBI-374916">
        <id>Q9UBD5</id>
        <label>ORC3</label>
    </interactant>
    <organismsDiffer>false</organismsDiffer>
    <experiments>28</experiments>
</comment>
<comment type="interaction">
    <interactant intactId="EBI-374957">
        <id>Q13416</id>
    </interactant>
    <interactant intactId="EBI-374889">
        <id>O43929</id>
        <label>ORC4</label>
    </interactant>
    <organismsDiffer>false</organismsDiffer>
    <experiments>12</experiments>
</comment>
<comment type="interaction">
    <interactant intactId="EBI-374957">
        <id>Q13416</id>
    </interactant>
    <interactant intactId="EBI-374928">
        <id>O43913</id>
        <label>ORC5</label>
    </interactant>
    <organismsDiffer>false</organismsDiffer>
    <experiments>15</experiments>
</comment>
<comment type="interaction">
    <interactant intactId="EBI-374957">
        <id>Q13416</id>
    </interactant>
    <interactant intactId="EBI-2339393">
        <id>Q9NS91</id>
        <label>RAD18</label>
    </interactant>
    <organismsDiffer>false</organismsDiffer>
    <experiments>3</experiments>
</comment>
<comment type="interaction">
    <interactant intactId="EBI-374957">
        <id>Q13416</id>
    </interactant>
    <interactant intactId="EBI-12092053">
        <id>P57055</id>
        <label>RIPPLY3</label>
    </interactant>
    <organismsDiffer>false</organismsDiffer>
    <experiments>3</experiments>
</comment>
<comment type="interaction">
    <interactant intactId="EBI-374957">
        <id>Q13416</id>
    </interactant>
    <interactant intactId="EBI-706637">
        <id>Q15554</id>
        <label>TERF2</label>
    </interactant>
    <organismsDiffer>false</organismsDiffer>
    <experiments>3</experiments>
</comment>
<comment type="interaction">
    <interactant intactId="EBI-374957">
        <id>Q13416</id>
    </interactant>
    <interactant intactId="EBI-996522">
        <id>P03211</id>
        <label>EBNA1</label>
    </interactant>
    <organismsDiffer>true</organismsDiffer>
    <experiments>6</experiments>
</comment>
<comment type="subcellular location">
    <subcellularLocation>
        <location>Nucleus</location>
    </subcellularLocation>
</comment>
<comment type="similarity">
    <text evidence="10">Belongs to the ORC2 family.</text>
</comment>
<keyword id="KW-0002">3D-structure</keyword>
<keyword id="KW-0235">DNA replication</keyword>
<keyword id="KW-0539">Nucleus</keyword>
<keyword id="KW-0597">Phosphoprotein</keyword>
<keyword id="KW-1267">Proteomics identification</keyword>
<keyword id="KW-1185">Reference proteome</keyword>
<gene>
    <name type="primary">ORC2</name>
    <name type="synonym">ORC2L</name>
</gene>
<evidence type="ECO:0000250" key="1">
    <source>
        <dbReference type="UniProtKB" id="Q60862"/>
    </source>
</evidence>
<evidence type="ECO:0000256" key="2">
    <source>
        <dbReference type="SAM" id="MobiDB-lite"/>
    </source>
</evidence>
<evidence type="ECO:0000269" key="3">
    <source>
    </source>
</evidence>
<evidence type="ECO:0000269" key="4">
    <source>
    </source>
</evidence>
<evidence type="ECO:0000269" key="5">
    <source>
    </source>
</evidence>
<evidence type="ECO:0000269" key="6">
    <source>
    </source>
</evidence>
<evidence type="ECO:0000269" key="7">
    <source>
    </source>
</evidence>
<evidence type="ECO:0000269" key="8">
    <source>
    </source>
</evidence>
<evidence type="ECO:0000269" key="9">
    <source ref="4"/>
</evidence>
<evidence type="ECO:0000305" key="10"/>
<evidence type="ECO:0007744" key="11">
    <source>
    </source>
</evidence>
<evidence type="ECO:0007744" key="12">
    <source>
    </source>
</evidence>
<evidence type="ECO:0007744" key="13">
    <source>
    </source>
</evidence>
<evidence type="ECO:0007829" key="14">
    <source>
        <dbReference type="PDB" id="5C8H"/>
    </source>
</evidence>
<evidence type="ECO:0007829" key="15">
    <source>
        <dbReference type="PDB" id="7JPO"/>
    </source>
</evidence>
<evidence type="ECO:0007829" key="16">
    <source>
        <dbReference type="PDB" id="7JPQ"/>
    </source>
</evidence>
<accession>Q13416</accession>
<accession>Q13204</accession>
<accession>Q53TX5</accession>
<sequence length="577" mass="65972">MSKPELKEDKMLEVHFVGDDDVLNHILDREGGAKLKKERAQLLVNPKKIIKKPEYDLEEDDQEVLKDQNYVEIMGRDVQESLKNGSATGGGNKVYSFQNRKHSEKMAKLASELAKTPQKSVSFSLKNDPEITINVPQSSKGHSASDKVQPKNNDKSEFLSTAPRSLRKRLIVPRSHSDSESEYSASNSEDDEGVAQEHEEDTNAVIFSQKIQAQNRVVSAPVGKETPSKRMKRDKTSDLVEEYFEAHSSSKVLTSDRTLQKLKRAKLDQQTLRNLLSKVSPSFSAELKQLNQQYEKLFHKWMLQLHLGFNIVLYGLGSKRDLLERFRTTMLQDSIHVVINGFFPGISVKSVLNSITEEVLDHMGTFRSILDQLDWIVNKFKEDSSLELFLLIHNLDSQMLRGEKSQQIIGQLSSLHNIYLIASIDHLNAPLMWDHAKQSLFNWLWYETTTYSPYTEETSYENSLLVKQSGSLPLSSLTHVLRSLTPNARGIFRLLIKYQLDNQDNPSYIGLSFQDFYQQCREAFLVNSDLTLRAQLTEFRDHKLIRTKKGTDGVEYLLIPVDNGTLTDFLEKEEEEA</sequence>
<protein>
    <recommendedName>
        <fullName>Origin recognition complex subunit 2</fullName>
    </recommendedName>
</protein>
<feature type="chain" id="PRO_0000127075" description="Origin recognition complex subunit 2">
    <location>
        <begin position="1"/>
        <end position="577"/>
    </location>
</feature>
<feature type="repeat" description="Involved in LRWD1-binding">
    <location>
        <begin position="1"/>
        <end position="100"/>
    </location>
</feature>
<feature type="region of interest" description="Disordered" evidence="2">
    <location>
        <begin position="81"/>
        <end position="199"/>
    </location>
</feature>
<feature type="compositionally biased region" description="Basic and acidic residues" evidence="2">
    <location>
        <begin position="143"/>
        <end position="157"/>
    </location>
</feature>
<feature type="compositionally biased region" description="Acidic residues" evidence="2">
    <location>
        <begin position="188"/>
        <end position="199"/>
    </location>
</feature>
<feature type="modified residue" description="Phosphothreonine" evidence="11 12 13">
    <location>
        <position position="116"/>
    </location>
</feature>
<feature type="modified residue" description="Phosphoserine" evidence="12">
    <location>
        <position position="122"/>
    </location>
</feature>
<feature type="modified residue" description="Phosphoserine" evidence="12">
    <location>
        <position position="138"/>
    </location>
</feature>
<feature type="modified residue" description="Phosphothreonine" evidence="12 13">
    <location>
        <position position="226"/>
    </location>
</feature>
<feature type="modified residue" description="Phosphoserine" evidence="13">
    <location>
        <position position="248"/>
    </location>
</feature>
<feature type="modified residue" description="Phosphoserine" evidence="11 13">
    <location>
        <position position="280"/>
    </location>
</feature>
<feature type="sequence variant" id="VAR_014515" description="In dbSNP:rs2307361." evidence="9">
    <original>M</original>
    <variation>K</variation>
    <location>
        <position position="106"/>
    </location>
</feature>
<feature type="sequence variant" id="VAR_021276" description="In dbSNP:rs16835624." evidence="9">
    <original>R</original>
    <variation>Q</variation>
    <location>
        <position position="521"/>
    </location>
</feature>
<feature type="sequence conflict" description="In Ref. 3; AAB33970." evidence="10" ref="3">
    <original>I</original>
    <variation>V</variation>
    <location>
        <position position="131"/>
    </location>
</feature>
<feature type="sequence conflict" description="In Ref. 3; AAB33970." evidence="10" ref="3">
    <original>T</original>
    <variation>L</variation>
    <location>
        <position position="236"/>
    </location>
</feature>
<feature type="sequence conflict" description="In Ref. 3; AAB33970." evidence="10" ref="3">
    <original>I</original>
    <variation>M</variation>
    <location>
        <position position="392"/>
    </location>
</feature>
<feature type="helix" evidence="15">
    <location>
        <begin position="240"/>
        <end position="247"/>
    </location>
</feature>
<feature type="helix" evidence="15">
    <location>
        <begin position="271"/>
        <end position="275"/>
    </location>
</feature>
<feature type="helix" evidence="15">
    <location>
        <begin position="284"/>
        <end position="288"/>
    </location>
</feature>
<feature type="turn" evidence="15">
    <location>
        <begin position="289"/>
        <end position="291"/>
    </location>
</feature>
<feature type="turn" evidence="15">
    <location>
        <begin position="294"/>
        <end position="297"/>
    </location>
</feature>
<feature type="helix" evidence="15">
    <location>
        <begin position="298"/>
        <end position="306"/>
    </location>
</feature>
<feature type="strand" evidence="15">
    <location>
        <begin position="310"/>
        <end position="314"/>
    </location>
</feature>
<feature type="helix" evidence="15">
    <location>
        <begin position="320"/>
        <end position="329"/>
    </location>
</feature>
<feature type="strand" evidence="15">
    <location>
        <begin position="332"/>
        <end position="339"/>
    </location>
</feature>
<feature type="strand" evidence="16">
    <location>
        <begin position="343"/>
        <end position="345"/>
    </location>
</feature>
<feature type="helix" evidence="15">
    <location>
        <begin position="348"/>
        <end position="358"/>
    </location>
</feature>
<feature type="helix" evidence="15">
    <location>
        <begin position="369"/>
        <end position="382"/>
    </location>
</feature>
<feature type="strand" evidence="15">
    <location>
        <begin position="388"/>
        <end position="393"/>
    </location>
</feature>
<feature type="strand" evidence="15">
    <location>
        <begin position="395"/>
        <end position="397"/>
    </location>
</feature>
<feature type="turn" evidence="15">
    <location>
        <begin position="398"/>
        <end position="400"/>
    </location>
</feature>
<feature type="helix" evidence="15">
    <location>
        <begin position="403"/>
        <end position="413"/>
    </location>
</feature>
<feature type="strand" evidence="15">
    <location>
        <begin position="418"/>
        <end position="424"/>
    </location>
</feature>
<feature type="helix" evidence="15">
    <location>
        <begin position="429"/>
        <end position="432"/>
    </location>
</feature>
<feature type="turn" evidence="15">
    <location>
        <begin position="435"/>
        <end position="440"/>
    </location>
</feature>
<feature type="strand" evidence="15">
    <location>
        <begin position="443"/>
        <end position="447"/>
    </location>
</feature>
<feature type="turn" evidence="15">
    <location>
        <begin position="456"/>
        <end position="463"/>
    </location>
</feature>
<feature type="strand" evidence="16">
    <location>
        <begin position="464"/>
        <end position="466"/>
    </location>
</feature>
<feature type="strand" evidence="16">
    <location>
        <begin position="469"/>
        <end position="472"/>
    </location>
</feature>
<feature type="helix" evidence="14">
    <location>
        <begin position="474"/>
        <end position="481"/>
    </location>
</feature>
<feature type="helix" evidence="14">
    <location>
        <begin position="486"/>
        <end position="501"/>
    </location>
</feature>
<feature type="turn" evidence="14">
    <location>
        <begin position="502"/>
        <end position="504"/>
    </location>
</feature>
<feature type="helix" evidence="14">
    <location>
        <begin position="513"/>
        <end position="522"/>
    </location>
</feature>
<feature type="helix" evidence="14">
    <location>
        <begin position="529"/>
        <end position="541"/>
    </location>
</feature>
<feature type="strand" evidence="14">
    <location>
        <begin position="546"/>
        <end position="549"/>
    </location>
</feature>
<feature type="strand" evidence="14">
    <location>
        <begin position="555"/>
        <end position="558"/>
    </location>
</feature>
<feature type="helix" evidence="14">
    <location>
        <begin position="563"/>
        <end position="572"/>
    </location>
</feature>
<reference key="1">
    <citation type="journal article" date="1995" name="Science">
        <title>Conserved initiator proteins in eukaryotes.</title>
        <authorList>
            <person name="Gavin K.A."/>
            <person name="Hidaka M."/>
            <person name="Stillman B.D."/>
        </authorList>
    </citation>
    <scope>NUCLEOTIDE SEQUENCE [MRNA]</scope>
</reference>
<reference key="2">
    <citation type="submission" date="1999-03" db="EMBL/GenBank/DDBJ databases">
        <authorList>
            <person name="Hidaka M."/>
            <person name="Stillman B."/>
        </authorList>
    </citation>
    <scope>SEQUENCE REVISION TO 41-42</scope>
</reference>
<reference key="3">
    <citation type="journal article" date="1996" name="Genomics">
        <title>Mouse and human homologues of the yeast origin of replication recognition complex subunit ORC2 and chromosomal localization of the cognate human gene ORC2L.</title>
        <authorList>
            <person name="Takahara K."/>
            <person name="Bong M."/>
            <person name="Brevard R."/>
            <person name="Eddy R.L."/>
            <person name="Haley L.L."/>
            <person name="Sait S.J."/>
            <person name="Shows T.B."/>
            <person name="Hoffman G.G."/>
            <person name="Greenspan D.S."/>
        </authorList>
    </citation>
    <scope>NUCLEOTIDE SEQUENCE [MRNA]</scope>
</reference>
<reference key="4">
    <citation type="submission" date="2004-06" db="EMBL/GenBank/DDBJ databases">
        <authorList>
            <consortium name="NIEHS SNPs program"/>
        </authorList>
    </citation>
    <scope>NUCLEOTIDE SEQUENCE [GENOMIC DNA]</scope>
    <scope>VARIANTS LYS-106 AND GLN-521</scope>
</reference>
<reference key="5">
    <citation type="journal article" date="2005" name="Nature">
        <title>Generation and annotation of the DNA sequences of human chromosomes 2 and 4.</title>
        <authorList>
            <person name="Hillier L.W."/>
            <person name="Graves T.A."/>
            <person name="Fulton R.S."/>
            <person name="Fulton L.A."/>
            <person name="Pepin K.H."/>
            <person name="Minx P."/>
            <person name="Wagner-McPherson C."/>
            <person name="Layman D."/>
            <person name="Wylie K."/>
            <person name="Sekhon M."/>
            <person name="Becker M.C."/>
            <person name="Fewell G.A."/>
            <person name="Delehaunty K.D."/>
            <person name="Miner T.L."/>
            <person name="Nash W.E."/>
            <person name="Kremitzki C."/>
            <person name="Oddy L."/>
            <person name="Du H."/>
            <person name="Sun H."/>
            <person name="Bradshaw-Cordum H."/>
            <person name="Ali J."/>
            <person name="Carter J."/>
            <person name="Cordes M."/>
            <person name="Harris A."/>
            <person name="Isak A."/>
            <person name="van Brunt A."/>
            <person name="Nguyen C."/>
            <person name="Du F."/>
            <person name="Courtney L."/>
            <person name="Kalicki J."/>
            <person name="Ozersky P."/>
            <person name="Abbott S."/>
            <person name="Armstrong J."/>
            <person name="Belter E.A."/>
            <person name="Caruso L."/>
            <person name="Cedroni M."/>
            <person name="Cotton M."/>
            <person name="Davidson T."/>
            <person name="Desai A."/>
            <person name="Elliott G."/>
            <person name="Erb T."/>
            <person name="Fronick C."/>
            <person name="Gaige T."/>
            <person name="Haakenson W."/>
            <person name="Haglund K."/>
            <person name="Holmes A."/>
            <person name="Harkins R."/>
            <person name="Kim K."/>
            <person name="Kruchowski S.S."/>
            <person name="Strong C.M."/>
            <person name="Grewal N."/>
            <person name="Goyea E."/>
            <person name="Hou S."/>
            <person name="Levy A."/>
            <person name="Martinka S."/>
            <person name="Mead K."/>
            <person name="McLellan M.D."/>
            <person name="Meyer R."/>
            <person name="Randall-Maher J."/>
            <person name="Tomlinson C."/>
            <person name="Dauphin-Kohlberg S."/>
            <person name="Kozlowicz-Reilly A."/>
            <person name="Shah N."/>
            <person name="Swearengen-Shahid S."/>
            <person name="Snider J."/>
            <person name="Strong J.T."/>
            <person name="Thompson J."/>
            <person name="Yoakum M."/>
            <person name="Leonard S."/>
            <person name="Pearman C."/>
            <person name="Trani L."/>
            <person name="Radionenko M."/>
            <person name="Waligorski J.E."/>
            <person name="Wang C."/>
            <person name="Rock S.M."/>
            <person name="Tin-Wollam A.-M."/>
            <person name="Maupin R."/>
            <person name="Latreille P."/>
            <person name="Wendl M.C."/>
            <person name="Yang S.-P."/>
            <person name="Pohl C."/>
            <person name="Wallis J.W."/>
            <person name="Spieth J."/>
            <person name="Bieri T.A."/>
            <person name="Berkowicz N."/>
            <person name="Nelson J.O."/>
            <person name="Osborne J."/>
            <person name="Ding L."/>
            <person name="Meyer R."/>
            <person name="Sabo A."/>
            <person name="Shotland Y."/>
            <person name="Sinha P."/>
            <person name="Wohldmann P.E."/>
            <person name="Cook L.L."/>
            <person name="Hickenbotham M.T."/>
            <person name="Eldred J."/>
            <person name="Williams D."/>
            <person name="Jones T.A."/>
            <person name="She X."/>
            <person name="Ciccarelli F.D."/>
            <person name="Izaurralde E."/>
            <person name="Taylor J."/>
            <person name="Schmutz J."/>
            <person name="Myers R.M."/>
            <person name="Cox D.R."/>
            <person name="Huang X."/>
            <person name="McPherson J.D."/>
            <person name="Mardis E.R."/>
            <person name="Clifton S.W."/>
            <person name="Warren W.C."/>
            <person name="Chinwalla A.T."/>
            <person name="Eddy S.R."/>
            <person name="Marra M.A."/>
            <person name="Ovcharenko I."/>
            <person name="Furey T.S."/>
            <person name="Miller W."/>
            <person name="Eichler E.E."/>
            <person name="Bork P."/>
            <person name="Suyama M."/>
            <person name="Torrents D."/>
            <person name="Waterston R.H."/>
            <person name="Wilson R.K."/>
        </authorList>
    </citation>
    <scope>NUCLEOTIDE SEQUENCE [LARGE SCALE GENOMIC DNA]</scope>
</reference>
<reference key="6">
    <citation type="submission" date="2005-09" db="EMBL/GenBank/DDBJ databases">
        <authorList>
            <person name="Mural R.J."/>
            <person name="Istrail S."/>
            <person name="Sutton G.G."/>
            <person name="Florea L."/>
            <person name="Halpern A.L."/>
            <person name="Mobarry C.M."/>
            <person name="Lippert R."/>
            <person name="Walenz B."/>
            <person name="Shatkay H."/>
            <person name="Dew I."/>
            <person name="Miller J.R."/>
            <person name="Flanigan M.J."/>
            <person name="Edwards N.J."/>
            <person name="Bolanos R."/>
            <person name="Fasulo D."/>
            <person name="Halldorsson B.V."/>
            <person name="Hannenhalli S."/>
            <person name="Turner R."/>
            <person name="Yooseph S."/>
            <person name="Lu F."/>
            <person name="Nusskern D.R."/>
            <person name="Shue B.C."/>
            <person name="Zheng X.H."/>
            <person name="Zhong F."/>
            <person name="Delcher A.L."/>
            <person name="Huson D.H."/>
            <person name="Kravitz S.A."/>
            <person name="Mouchard L."/>
            <person name="Reinert K."/>
            <person name="Remington K.A."/>
            <person name="Clark A.G."/>
            <person name="Waterman M.S."/>
            <person name="Eichler E.E."/>
            <person name="Adams M.D."/>
            <person name="Hunkapiller M.W."/>
            <person name="Myers E.W."/>
            <person name="Venter J.C."/>
        </authorList>
    </citation>
    <scope>NUCLEOTIDE SEQUENCE [LARGE SCALE GENOMIC DNA]</scope>
</reference>
<reference key="7">
    <citation type="journal article" date="2004" name="Genome Res.">
        <title>The status, quality, and expansion of the NIH full-length cDNA project: the Mammalian Gene Collection (MGC).</title>
        <authorList>
            <consortium name="The MGC Project Team"/>
        </authorList>
    </citation>
    <scope>NUCLEOTIDE SEQUENCE [LARGE SCALE MRNA]</scope>
    <source>
        <tissue>Placenta</tissue>
    </source>
</reference>
<reference key="8">
    <citation type="journal article" date="2000" name="Nucleic Acids Res.">
        <title>The human homolog of Saccharomyces cerevisiae Mcm10 interacts with replication factors and dissociates from nuclease-resistant nuclear structures in G(2) phase.</title>
        <authorList>
            <person name="Izumi M."/>
            <person name="Yanagi K."/>
            <person name="Mizuno T."/>
            <person name="Yokoi M."/>
            <person name="Kawasaki Y."/>
            <person name="Moon K.Y."/>
            <person name="Hurwitz J."/>
            <person name="Yatagai F."/>
            <person name="Hanaoka F."/>
        </authorList>
    </citation>
    <scope>INTERACTION WITH MCM10</scope>
</reference>
<reference key="9">
    <citation type="journal article" date="2003" name="J. Biol. Chem.">
        <title>The ORC1 cycle in human cells: II. Dynamic changes in the human ORC complex during the cell cycle.</title>
        <authorList>
            <person name="Ohta S."/>
            <person name="Tatsumi Y."/>
            <person name="Fujita M."/>
            <person name="Tsurimoto T."/>
            <person name="Obuse C."/>
        </authorList>
    </citation>
    <scope>IDENTIFICATION IN THE ORC COMPLEX</scope>
    <scope>IDENTIFICATION BY MASS SPECTROMETRY</scope>
    <scope>ASSEMBLY OF THE ORC COMPLEX</scope>
</reference>
<reference key="10">
    <citation type="journal article" date="2007" name="J. Biol. Chem.">
        <title>ATP-dependent assembly of the human origin recognition complex.</title>
        <authorList>
            <person name="Siddiqui K."/>
            <person name="Stillman B."/>
        </authorList>
    </citation>
    <scope>RECONSTITUTION OF THE ORC COMPLEX</scope>
    <scope>DISASSEMBLY OF THE ORC COMPLEX</scope>
</reference>
<reference key="11">
    <citation type="journal article" date="2008" name="Proc. Natl. Acad. Sci. U.S.A.">
        <title>A quantitative atlas of mitotic phosphorylation.</title>
        <authorList>
            <person name="Dephoure N."/>
            <person name="Zhou C."/>
            <person name="Villen J."/>
            <person name="Beausoleil S.A."/>
            <person name="Bakalarski C.E."/>
            <person name="Elledge S.J."/>
            <person name="Gygi S.P."/>
        </authorList>
    </citation>
    <scope>PHOSPHORYLATION [LARGE SCALE ANALYSIS] AT THR-116 AND SER-280</scope>
    <scope>IDENTIFICATION BY MASS SPECTROMETRY [LARGE SCALE ANALYSIS]</scope>
    <source>
        <tissue>Cervix carcinoma</tissue>
    </source>
</reference>
<reference key="12">
    <citation type="journal article" date="2010" name="Sci. Signal.">
        <title>Quantitative phosphoproteomics reveals widespread full phosphorylation site occupancy during mitosis.</title>
        <authorList>
            <person name="Olsen J.V."/>
            <person name="Vermeulen M."/>
            <person name="Santamaria A."/>
            <person name="Kumar C."/>
            <person name="Miller M.L."/>
            <person name="Jensen L.J."/>
            <person name="Gnad F."/>
            <person name="Cox J."/>
            <person name="Jensen T.S."/>
            <person name="Nigg E.A."/>
            <person name="Brunak S."/>
            <person name="Mann M."/>
        </authorList>
    </citation>
    <scope>PHOSPHORYLATION [LARGE SCALE ANALYSIS] AT THR-116; SER-122; SER-138 AND THR-226</scope>
    <scope>IDENTIFICATION BY MASS SPECTROMETRY [LARGE SCALE ANALYSIS]</scope>
    <source>
        <tissue>Cervix carcinoma</tissue>
    </source>
</reference>
<reference key="13">
    <citation type="journal article" date="2011" name="BMC Syst. Biol.">
        <title>Initial characterization of the human central proteome.</title>
        <authorList>
            <person name="Burkard T.R."/>
            <person name="Planyavsky M."/>
            <person name="Kaupe I."/>
            <person name="Breitwieser F.P."/>
            <person name="Buerckstuemmer T."/>
            <person name="Bennett K.L."/>
            <person name="Superti-Furga G."/>
            <person name="Colinge J."/>
        </authorList>
    </citation>
    <scope>IDENTIFICATION BY MASS SPECTROMETRY [LARGE SCALE ANALYSIS]</scope>
</reference>
<reference key="14">
    <citation type="journal article" date="2012" name="Cell Cycle">
        <title>Orc2 protects ORCA from ubiquitin-mediated degradation.</title>
        <authorList>
            <person name="Shen Z."/>
            <person name="Prasanth S.G."/>
        </authorList>
    </citation>
    <scope>FUNCTION</scope>
    <scope>INTERACTION WITH LRWD1</scope>
</reference>
<reference key="15">
    <citation type="journal article" date="2012" name="J. Biol. Chem.">
        <title>Leucine-rich repeat and WD repeat-containing protein 1 is recruited to pericentric heterochromatin by trimethylated lysine 9 of histone H3 and maintains heterochromatin silencing.</title>
        <authorList>
            <person name="Chan K.M."/>
            <person name="Zhang Z."/>
        </authorList>
    </citation>
    <scope>FUNCTION</scope>
    <scope>BINDING TO HISTONE H3 AND H4 TRIMETHYLATION MARKS</scope>
</reference>
<reference key="16">
    <citation type="journal article" date="2012" name="Mol. Cell. Biol.">
        <title>Dynamic association of ORCA with prereplicative complex components regulates DNA replication initiation.</title>
        <authorList>
            <person name="Shen Z."/>
            <person name="Chakraborty A."/>
            <person name="Jain A."/>
            <person name="Giri S."/>
            <person name="Ha T."/>
            <person name="Prasanth K.V."/>
            <person name="Prasanth S.G."/>
        </authorList>
    </citation>
    <scope>INTERACTION WITH LRWD1</scope>
</reference>
<reference key="17">
    <citation type="journal article" date="2013" name="J. Proteome Res.">
        <title>Toward a comprehensive characterization of a human cancer cell phosphoproteome.</title>
        <authorList>
            <person name="Zhou H."/>
            <person name="Di Palma S."/>
            <person name="Preisinger C."/>
            <person name="Peng M."/>
            <person name="Polat A.N."/>
            <person name="Heck A.J."/>
            <person name="Mohammed S."/>
        </authorList>
    </citation>
    <scope>PHOSPHORYLATION [LARGE SCALE ANALYSIS] AT THR-116; THR-226; SER-248 AND SER-280</scope>
    <scope>IDENTIFICATION BY MASS SPECTROMETRY [LARGE SCALE ANALYSIS]</scope>
    <source>
        <tissue>Cervix carcinoma</tissue>
        <tissue>Erythroleukemia</tissue>
    </source>
</reference>
<reference key="18">
    <citation type="journal article" date="2014" name="Nat. Commun.">
        <title>A role for DNA polymerase theta in the timing of DNA replication.</title>
        <authorList>
            <person name="Fernandez-Vidal A."/>
            <person name="Guitton-Sert L."/>
            <person name="Cadoret J.C."/>
            <person name="Drac M."/>
            <person name="Schwob E."/>
            <person name="Baldacci G."/>
            <person name="Cazaux C."/>
            <person name="Hoffmann J.S."/>
        </authorList>
    </citation>
    <scope>INTERACTION WITH POLQ</scope>
</reference>